<name>HLDD_PSEP7</name>
<gene>
    <name evidence="1" type="primary">hldD</name>
    <name type="ordered locus">PSPA7_1793</name>
</gene>
<feature type="chain" id="PRO_1000069363" description="ADP-L-glycero-D-manno-heptose-6-epimerase">
    <location>
        <begin position="1"/>
        <end position="330"/>
    </location>
</feature>
<feature type="active site" description="Proton acceptor" evidence="1">
    <location>
        <position position="139"/>
    </location>
</feature>
<feature type="active site" description="Proton acceptor" evidence="1">
    <location>
        <position position="177"/>
    </location>
</feature>
<feature type="binding site" evidence="1">
    <location>
        <begin position="11"/>
        <end position="12"/>
    </location>
    <ligand>
        <name>NADP(+)</name>
        <dbReference type="ChEBI" id="CHEBI:58349"/>
    </ligand>
</feature>
<feature type="binding site" evidence="1">
    <location>
        <begin position="32"/>
        <end position="33"/>
    </location>
    <ligand>
        <name>NADP(+)</name>
        <dbReference type="ChEBI" id="CHEBI:58349"/>
    </ligand>
</feature>
<feature type="binding site" evidence="1">
    <location>
        <position position="39"/>
    </location>
    <ligand>
        <name>NADP(+)</name>
        <dbReference type="ChEBI" id="CHEBI:58349"/>
    </ligand>
</feature>
<feature type="binding site" evidence="1">
    <location>
        <position position="54"/>
    </location>
    <ligand>
        <name>NADP(+)</name>
        <dbReference type="ChEBI" id="CHEBI:58349"/>
    </ligand>
</feature>
<feature type="binding site" evidence="1">
    <location>
        <begin position="75"/>
        <end position="79"/>
    </location>
    <ligand>
        <name>NADP(+)</name>
        <dbReference type="ChEBI" id="CHEBI:58349"/>
    </ligand>
</feature>
<feature type="binding site" evidence="1">
    <location>
        <position position="92"/>
    </location>
    <ligand>
        <name>NADP(+)</name>
        <dbReference type="ChEBI" id="CHEBI:58349"/>
    </ligand>
</feature>
<feature type="binding site" evidence="1">
    <location>
        <position position="143"/>
    </location>
    <ligand>
        <name>NADP(+)</name>
        <dbReference type="ChEBI" id="CHEBI:58349"/>
    </ligand>
</feature>
<feature type="binding site" evidence="1">
    <location>
        <position position="168"/>
    </location>
    <ligand>
        <name>substrate</name>
    </ligand>
</feature>
<feature type="binding site" evidence="1">
    <location>
        <position position="169"/>
    </location>
    <ligand>
        <name>NADP(+)</name>
        <dbReference type="ChEBI" id="CHEBI:58349"/>
    </ligand>
</feature>
<feature type="binding site" evidence="1">
    <location>
        <position position="177"/>
    </location>
    <ligand>
        <name>NADP(+)</name>
        <dbReference type="ChEBI" id="CHEBI:58349"/>
    </ligand>
</feature>
<feature type="binding site" evidence="1">
    <location>
        <position position="179"/>
    </location>
    <ligand>
        <name>substrate</name>
    </ligand>
</feature>
<feature type="binding site" evidence="1">
    <location>
        <position position="186"/>
    </location>
    <ligand>
        <name>substrate</name>
    </ligand>
</feature>
<feature type="binding site" evidence="1">
    <location>
        <begin position="200"/>
        <end position="203"/>
    </location>
    <ligand>
        <name>substrate</name>
    </ligand>
</feature>
<feature type="binding site" evidence="1">
    <location>
        <position position="213"/>
    </location>
    <ligand>
        <name>substrate</name>
    </ligand>
</feature>
<feature type="binding site" evidence="1">
    <location>
        <position position="292"/>
    </location>
    <ligand>
        <name>substrate</name>
    </ligand>
</feature>
<proteinExistence type="inferred from homology"/>
<keyword id="KW-0119">Carbohydrate metabolism</keyword>
<keyword id="KW-0413">Isomerase</keyword>
<keyword id="KW-0521">NADP</keyword>
<dbReference type="EC" id="5.1.3.20" evidence="1"/>
<dbReference type="EMBL" id="CP000744">
    <property type="protein sequence ID" value="ABR85718.1"/>
    <property type="molecule type" value="Genomic_DNA"/>
</dbReference>
<dbReference type="RefSeq" id="WP_012074906.1">
    <property type="nucleotide sequence ID" value="NC_009656.1"/>
</dbReference>
<dbReference type="SMR" id="A6V291"/>
<dbReference type="KEGG" id="pap:PSPA7_1793"/>
<dbReference type="HOGENOM" id="CLU_007383_1_3_6"/>
<dbReference type="UniPathway" id="UPA00356">
    <property type="reaction ID" value="UER00440"/>
</dbReference>
<dbReference type="Proteomes" id="UP000001582">
    <property type="component" value="Chromosome"/>
</dbReference>
<dbReference type="GO" id="GO:0008712">
    <property type="term" value="F:ADP-glyceromanno-heptose 6-epimerase activity"/>
    <property type="evidence" value="ECO:0007669"/>
    <property type="project" value="UniProtKB-UniRule"/>
</dbReference>
<dbReference type="GO" id="GO:0050661">
    <property type="term" value="F:NADP binding"/>
    <property type="evidence" value="ECO:0007669"/>
    <property type="project" value="InterPro"/>
</dbReference>
<dbReference type="GO" id="GO:0097171">
    <property type="term" value="P:ADP-L-glycero-beta-D-manno-heptose biosynthetic process"/>
    <property type="evidence" value="ECO:0007669"/>
    <property type="project" value="UniProtKB-UniPathway"/>
</dbReference>
<dbReference type="GO" id="GO:0005975">
    <property type="term" value="P:carbohydrate metabolic process"/>
    <property type="evidence" value="ECO:0007669"/>
    <property type="project" value="UniProtKB-UniRule"/>
</dbReference>
<dbReference type="CDD" id="cd05248">
    <property type="entry name" value="ADP_GME_SDR_e"/>
    <property type="match status" value="1"/>
</dbReference>
<dbReference type="Gene3D" id="3.40.50.720">
    <property type="entry name" value="NAD(P)-binding Rossmann-like Domain"/>
    <property type="match status" value="1"/>
</dbReference>
<dbReference type="Gene3D" id="3.90.25.10">
    <property type="entry name" value="UDP-galactose 4-epimerase, domain 1"/>
    <property type="match status" value="1"/>
</dbReference>
<dbReference type="HAMAP" id="MF_01601">
    <property type="entry name" value="Heptose_epimerase"/>
    <property type="match status" value="1"/>
</dbReference>
<dbReference type="InterPro" id="IPR001509">
    <property type="entry name" value="Epimerase_deHydtase"/>
</dbReference>
<dbReference type="InterPro" id="IPR011912">
    <property type="entry name" value="Heptose_epim"/>
</dbReference>
<dbReference type="InterPro" id="IPR036291">
    <property type="entry name" value="NAD(P)-bd_dom_sf"/>
</dbReference>
<dbReference type="NCBIfam" id="TIGR02197">
    <property type="entry name" value="heptose_epim"/>
    <property type="match status" value="1"/>
</dbReference>
<dbReference type="PANTHER" id="PTHR43103:SF3">
    <property type="entry name" value="ADP-L-GLYCERO-D-MANNO-HEPTOSE-6-EPIMERASE"/>
    <property type="match status" value="1"/>
</dbReference>
<dbReference type="PANTHER" id="PTHR43103">
    <property type="entry name" value="NUCLEOSIDE-DIPHOSPHATE-SUGAR EPIMERASE"/>
    <property type="match status" value="1"/>
</dbReference>
<dbReference type="Pfam" id="PF01370">
    <property type="entry name" value="Epimerase"/>
    <property type="match status" value="1"/>
</dbReference>
<dbReference type="SUPFAM" id="SSF51735">
    <property type="entry name" value="NAD(P)-binding Rossmann-fold domains"/>
    <property type="match status" value="1"/>
</dbReference>
<comment type="function">
    <text evidence="1">Catalyzes the interconversion between ADP-D-glycero-beta-D-manno-heptose and ADP-L-glycero-beta-D-manno-heptose via an epimerization at carbon 6 of the heptose.</text>
</comment>
<comment type="catalytic activity">
    <reaction evidence="1">
        <text>ADP-D-glycero-beta-D-manno-heptose = ADP-L-glycero-beta-D-manno-heptose</text>
        <dbReference type="Rhea" id="RHEA:17577"/>
        <dbReference type="ChEBI" id="CHEBI:59967"/>
        <dbReference type="ChEBI" id="CHEBI:61506"/>
        <dbReference type="EC" id="5.1.3.20"/>
    </reaction>
</comment>
<comment type="cofactor">
    <cofactor evidence="1">
        <name>NADP(+)</name>
        <dbReference type="ChEBI" id="CHEBI:58349"/>
    </cofactor>
    <text evidence="1">Binds 1 NADP(+) per subunit.</text>
</comment>
<comment type="pathway">
    <text evidence="1">Nucleotide-sugar biosynthesis; ADP-L-glycero-beta-D-manno-heptose biosynthesis; ADP-L-glycero-beta-D-manno-heptose from D-glycero-beta-D-manno-heptose 7-phosphate: step 4/4.</text>
</comment>
<comment type="subunit">
    <text evidence="1">Homopentamer.</text>
</comment>
<comment type="domain">
    <text evidence="1">Contains a large N-terminal NADP-binding domain, and a smaller C-terminal substrate-binding domain.</text>
</comment>
<comment type="similarity">
    <text evidence="1">Belongs to the NAD(P)-dependent epimerase/dehydratase family. HldD subfamily.</text>
</comment>
<protein>
    <recommendedName>
        <fullName evidence="1">ADP-L-glycero-D-manno-heptose-6-epimerase</fullName>
        <ecNumber evidence="1">5.1.3.20</ecNumber>
    </recommendedName>
    <alternativeName>
        <fullName evidence="1">ADP-L-glycero-beta-D-manno-heptose-6-epimerase</fullName>
        <shortName evidence="1">ADP-glyceromanno-heptose 6-epimerase</shortName>
        <shortName evidence="1">ADP-hep 6-epimerase</shortName>
        <shortName evidence="1">AGME</shortName>
    </alternativeName>
</protein>
<evidence type="ECO:0000255" key="1">
    <source>
        <dbReference type="HAMAP-Rule" id="MF_01601"/>
    </source>
</evidence>
<accession>A6V291</accession>
<organism>
    <name type="scientific">Pseudomonas paraeruginosa (strain DSM 24068 / PA7)</name>
    <name type="common">Pseudomonas aeruginosa (strain PA7)</name>
    <dbReference type="NCBI Taxonomy" id="381754"/>
    <lineage>
        <taxon>Bacteria</taxon>
        <taxon>Pseudomonadati</taxon>
        <taxon>Pseudomonadota</taxon>
        <taxon>Gammaproteobacteria</taxon>
        <taxon>Pseudomonadales</taxon>
        <taxon>Pseudomonadaceae</taxon>
        <taxon>Pseudomonas</taxon>
        <taxon>Pseudomonas paraeruginosa</taxon>
    </lineage>
</organism>
<sequence>MSIIVTGAAGFIGSNLLQALNQRGETDIIAVDDLTDGEQFRNLADADIADYLDQNDFIERYARGDFGPVRALFHQGACASTLESNGRYMMENNYRYSCRLLEASLELGVPFLYASSAAVYGAGRTFREARRYERPLNVYGYSKFLFDQRVRRALPQARSQVVGLRYFNVYGPREGHKGRMASVAYHCYQQLRRDGRVVLFGEHDGFPAGGHLRDFVAVEDVARVNLHFLDHPQRSGIFNLGSGRARSFNEVALAVINSVRASADQPPLVLAQALESGLLGYREFPEALRARYQSHTCADLELLREAGYRDDFLSLEEGVGGYCRWLARSA</sequence>
<reference key="1">
    <citation type="submission" date="2007-06" db="EMBL/GenBank/DDBJ databases">
        <authorList>
            <person name="Dodson R.J."/>
            <person name="Harkins D."/>
            <person name="Paulsen I.T."/>
        </authorList>
    </citation>
    <scope>NUCLEOTIDE SEQUENCE [LARGE SCALE GENOMIC DNA]</scope>
    <source>
        <strain>DSM 24068 / PA7</strain>
    </source>
</reference>